<keyword id="KW-0024">Alternative initiation</keyword>
<sequence length="65" mass="7952">MIIWILPCRMQMSLKKEERINISKTSSSKIKEINQLRHIIRKKNRQIQILTIMLNILRCCRRMKE</sequence>
<reference key="1">
    <citation type="journal article" date="1986" name="J. Gen. Virol.">
        <title>Conservation of potential phosphorylation sites in the NS proteins of the New Jersey and Indiana serotypes of vesicular stomatitis virus.</title>
        <authorList>
            <person name="Rae B.P."/>
            <person name="Elliott R.M."/>
        </authorList>
    </citation>
    <scope>NUCLEOTIDE SEQUENCE [MRNA]</scope>
</reference>
<reference key="2">
    <citation type="journal article" date="1986" name="J. Gen. Virol.">
        <title>Characterization of the mutations responsible for the electrophoretic mobility differences in the NS proteins of vesicular stomatitis virus New Jersey complementation group E mutants.</title>
        <authorList>
            <person name="Rae B.P."/>
            <person name="Elliott R.M."/>
        </authorList>
    </citation>
    <scope>NUCLEOTIDE SEQUENCE [MRNA]</scope>
</reference>
<gene>
    <name type="primary">P</name>
</gene>
<evidence type="ECO:0000250" key="1">
    <source>
        <dbReference type="UniProtKB" id="P0C2X2"/>
    </source>
</evidence>
<evidence type="ECO:0000305" key="2"/>
<dbReference type="EMBL" id="X04063">
    <property type="status" value="NOT_ANNOTATED_CDS"/>
    <property type="molecule type" value="mRNA"/>
</dbReference>
<dbReference type="EMBL" id="X04718">
    <property type="status" value="NOT_ANNOTATED_CDS"/>
    <property type="molecule type" value="mRNA"/>
</dbReference>
<dbReference type="SMR" id="P0C2X5"/>
<name>C_VSNJM</name>
<accession>P0C2X5</accession>
<organism>
    <name type="scientific">Vesicular stomatitis New Jersey virus (strain Missouri subtype Hazelhurst)</name>
    <name type="common">VSNJV</name>
    <dbReference type="NCBI Taxonomy" id="11282"/>
    <lineage>
        <taxon>Viruses</taxon>
        <taxon>Riboviria</taxon>
        <taxon>Orthornavirae</taxon>
        <taxon>Negarnaviricota</taxon>
        <taxon>Haploviricotina</taxon>
        <taxon>Monjiviricetes</taxon>
        <taxon>Mononegavirales</taxon>
        <taxon>Rhabdoviridae</taxon>
        <taxon>Alpharhabdovirinae</taxon>
        <taxon>Vesiculovirus</taxon>
        <taxon>Vesiculovirus newjersey</taxon>
    </lineage>
</organism>
<organismHost>
    <name type="scientific">Aedes</name>
    <dbReference type="NCBI Taxonomy" id="7158"/>
</organismHost>
<organismHost>
    <name type="scientific">Bos taurus</name>
    <name type="common">Bovine</name>
    <dbReference type="NCBI Taxonomy" id="9913"/>
</organismHost>
<organismHost>
    <name type="scientific">Culicoides</name>
    <dbReference type="NCBI Taxonomy" id="58271"/>
</organismHost>
<organismHost>
    <name type="scientific">Equus asinus</name>
    <name type="common">Donkey</name>
    <name type="synonym">Equus africanus asinus</name>
    <dbReference type="NCBI Taxonomy" id="9793"/>
</organismHost>
<organismHost>
    <name type="scientific">Equus caballus</name>
    <name type="common">Horse</name>
    <dbReference type="NCBI Taxonomy" id="9796"/>
</organismHost>
<organismHost>
    <name type="scientific">Homo sapiens</name>
    <name type="common">Human</name>
    <dbReference type="NCBI Taxonomy" id="9606"/>
</organismHost>
<organismHost>
    <name type="scientific">Lutzomyia</name>
    <dbReference type="NCBI Taxonomy" id="252607"/>
</organismHost>
<organismHost>
    <name type="scientific">Musca domestica</name>
    <name type="common">House fly</name>
    <dbReference type="NCBI Taxonomy" id="7370"/>
</organismHost>
<organismHost>
    <name type="scientific">Simuliidae</name>
    <name type="common">black flies</name>
    <dbReference type="NCBI Taxonomy" id="7190"/>
</organismHost>
<organismHost>
    <name type="scientific">Sus scrofa</name>
    <name type="common">Pig</name>
    <dbReference type="NCBI Taxonomy" id="9823"/>
</organismHost>
<comment type="function">
    <text evidence="1">Seems to stimulates transcription by the viral polymerase. May play a role in viral pathogenesis or transmission by insects vectors.</text>
</comment>
<comment type="alternative products">
    <event type="alternative initiation"/>
    <isoform>
        <id>P0C2X5-1</id>
        <name>C'</name>
        <sequence type="displayed"/>
    </isoform>
    <isoform>
        <id>P0C2X5-2</id>
        <name>C</name>
        <sequence type="described" ref="VSP_025750"/>
    </isoform>
</comment>
<comment type="miscellaneous">
    <text>The P gene has two overlapping open reading frames. One encodes the P protein and the other the C'/C proteins.</text>
</comment>
<comment type="similarity">
    <text evidence="2">Belongs to the rhabdoviruses C protein family.</text>
</comment>
<protein>
    <recommendedName>
        <fullName>Protein C'</fullName>
    </recommendedName>
</protein>
<feature type="chain" id="PRO_0000288657" description="Protein C'">
    <location>
        <begin position="1"/>
        <end position="65"/>
    </location>
</feature>
<feature type="splice variant" id="VSP_025750" description="In isoform C." evidence="2">
    <location>
        <begin position="1"/>
        <end position="11"/>
    </location>
</feature>
<proteinExistence type="inferred from homology"/>